<dbReference type="EMBL" id="CP000117">
    <property type="protein sequence ID" value="ABA20852.1"/>
    <property type="molecule type" value="Genomic_DNA"/>
</dbReference>
<dbReference type="SMR" id="Q3MDT4"/>
<dbReference type="STRING" id="240292.Ava_1228"/>
<dbReference type="KEGG" id="ava:Ava_1228"/>
<dbReference type="eggNOG" id="COG0217">
    <property type="taxonomic scope" value="Bacteria"/>
</dbReference>
<dbReference type="HOGENOM" id="CLU_062974_2_2_3"/>
<dbReference type="Proteomes" id="UP000002533">
    <property type="component" value="Chromosome"/>
</dbReference>
<dbReference type="GO" id="GO:0005829">
    <property type="term" value="C:cytosol"/>
    <property type="evidence" value="ECO:0007669"/>
    <property type="project" value="TreeGrafter"/>
</dbReference>
<dbReference type="GO" id="GO:0003677">
    <property type="term" value="F:DNA binding"/>
    <property type="evidence" value="ECO:0007669"/>
    <property type="project" value="UniProtKB-UniRule"/>
</dbReference>
<dbReference type="GO" id="GO:0006355">
    <property type="term" value="P:regulation of DNA-templated transcription"/>
    <property type="evidence" value="ECO:0007669"/>
    <property type="project" value="UniProtKB-UniRule"/>
</dbReference>
<dbReference type="FunFam" id="1.10.10.200:FF:000002">
    <property type="entry name" value="Probable transcriptional regulatory protein CLM62_37755"/>
    <property type="match status" value="1"/>
</dbReference>
<dbReference type="Gene3D" id="1.10.10.200">
    <property type="match status" value="1"/>
</dbReference>
<dbReference type="Gene3D" id="3.30.70.980">
    <property type="match status" value="2"/>
</dbReference>
<dbReference type="HAMAP" id="MF_00693">
    <property type="entry name" value="Transcrip_reg_TACO1"/>
    <property type="match status" value="1"/>
</dbReference>
<dbReference type="InterPro" id="IPR017856">
    <property type="entry name" value="Integrase-like_N"/>
</dbReference>
<dbReference type="InterPro" id="IPR048300">
    <property type="entry name" value="TACO1_YebC-like_2nd/3rd_dom"/>
</dbReference>
<dbReference type="InterPro" id="IPR049083">
    <property type="entry name" value="TACO1_YebC_N"/>
</dbReference>
<dbReference type="InterPro" id="IPR002876">
    <property type="entry name" value="Transcrip_reg_TACO1-like"/>
</dbReference>
<dbReference type="InterPro" id="IPR026564">
    <property type="entry name" value="Transcrip_reg_TACO1-like_dom3"/>
</dbReference>
<dbReference type="InterPro" id="IPR029072">
    <property type="entry name" value="YebC-like"/>
</dbReference>
<dbReference type="NCBIfam" id="NF001030">
    <property type="entry name" value="PRK00110.1"/>
    <property type="match status" value="1"/>
</dbReference>
<dbReference type="NCBIfam" id="NF009044">
    <property type="entry name" value="PRK12378.1"/>
    <property type="match status" value="1"/>
</dbReference>
<dbReference type="NCBIfam" id="TIGR01033">
    <property type="entry name" value="YebC/PmpR family DNA-binding transcriptional regulator"/>
    <property type="match status" value="1"/>
</dbReference>
<dbReference type="PANTHER" id="PTHR12532:SF6">
    <property type="entry name" value="TRANSCRIPTIONAL REGULATORY PROTEIN YEBC-RELATED"/>
    <property type="match status" value="1"/>
</dbReference>
<dbReference type="PANTHER" id="PTHR12532">
    <property type="entry name" value="TRANSLATIONAL ACTIVATOR OF CYTOCHROME C OXIDASE 1"/>
    <property type="match status" value="1"/>
</dbReference>
<dbReference type="Pfam" id="PF20772">
    <property type="entry name" value="TACO1_YebC_N"/>
    <property type="match status" value="1"/>
</dbReference>
<dbReference type="Pfam" id="PF01709">
    <property type="entry name" value="Transcrip_reg"/>
    <property type="match status" value="1"/>
</dbReference>
<dbReference type="SUPFAM" id="SSF75625">
    <property type="entry name" value="YebC-like"/>
    <property type="match status" value="1"/>
</dbReference>
<proteinExistence type="inferred from homology"/>
<name>Y1228_TRIV2</name>
<sequence length="252" mass="27131">MAGHSKWANIKRQKAVVDAKKGKTFTQLSRAIILAARSGIPDPSGNFQLRTAIDKAKAAGIPNDNIERAIAKGAGTFGGDNASLEEIRYEGYGPGGVAILIEALTDNRNRTAADLRVAFSKNGGNLGETGCVSWMFDQKGVCVVSGVVDEDQLLEASLEGGAESYEMTEDETAEVFTEVANLEILNQTLKDQGFKVTDAELRWIPSNNVEVTEPDQARSLLKLIDTLEGLDDVQNVTSNFEMSENLMAVSFA</sequence>
<reference key="1">
    <citation type="journal article" date="2014" name="Stand. Genomic Sci.">
        <title>Complete genome sequence of Anabaena variabilis ATCC 29413.</title>
        <authorList>
            <person name="Thiel T."/>
            <person name="Pratte B.S."/>
            <person name="Zhong J."/>
            <person name="Goodwin L."/>
            <person name="Copeland A."/>
            <person name="Lucas S."/>
            <person name="Han C."/>
            <person name="Pitluck S."/>
            <person name="Land M.L."/>
            <person name="Kyrpides N.C."/>
            <person name="Woyke T."/>
        </authorList>
    </citation>
    <scope>NUCLEOTIDE SEQUENCE [LARGE SCALE GENOMIC DNA]</scope>
    <source>
        <strain>ATCC 29413 / PCC 7937</strain>
    </source>
</reference>
<organism>
    <name type="scientific">Trichormus variabilis (strain ATCC 29413 / PCC 7937)</name>
    <name type="common">Anabaena variabilis</name>
    <dbReference type="NCBI Taxonomy" id="240292"/>
    <lineage>
        <taxon>Bacteria</taxon>
        <taxon>Bacillati</taxon>
        <taxon>Cyanobacteriota</taxon>
        <taxon>Cyanophyceae</taxon>
        <taxon>Nostocales</taxon>
        <taxon>Nostocaceae</taxon>
        <taxon>Trichormus</taxon>
    </lineage>
</organism>
<feature type="chain" id="PRO_0000257029" description="Probable transcriptional regulatory protein Ava_1228">
    <location>
        <begin position="1"/>
        <end position="252"/>
    </location>
</feature>
<keyword id="KW-0963">Cytoplasm</keyword>
<keyword id="KW-0238">DNA-binding</keyword>
<keyword id="KW-0804">Transcription</keyword>
<keyword id="KW-0805">Transcription regulation</keyword>
<accession>Q3MDT4</accession>
<gene>
    <name type="ordered locus">Ava_1228</name>
</gene>
<protein>
    <recommendedName>
        <fullName evidence="1">Probable transcriptional regulatory protein Ava_1228</fullName>
    </recommendedName>
</protein>
<evidence type="ECO:0000255" key="1">
    <source>
        <dbReference type="HAMAP-Rule" id="MF_00693"/>
    </source>
</evidence>
<comment type="subcellular location">
    <subcellularLocation>
        <location evidence="1">Cytoplasm</location>
    </subcellularLocation>
</comment>
<comment type="similarity">
    <text evidence="1">Belongs to the TACO1 family.</text>
</comment>